<protein>
    <recommendedName>
        <fullName>SEC14-like protein 2</fullName>
    </recommendedName>
    <alternativeName>
        <fullName>Alpha-tocopherol-associated protein</fullName>
        <shortName>TAP</shortName>
        <shortName>bTAP</shortName>
    </alternativeName>
</protein>
<accession>P58875</accession>
<accession>Q32KW6</accession>
<accession>Q867A0</accession>
<name>S14L2_BOVIN</name>
<dbReference type="EMBL" id="AF432353">
    <property type="protein sequence ID" value="AAO31942.1"/>
    <property type="molecule type" value="mRNA"/>
</dbReference>
<dbReference type="EMBL" id="BC109891">
    <property type="protein sequence ID" value="AAI09892.1"/>
    <property type="molecule type" value="mRNA"/>
</dbReference>
<dbReference type="EMBL" id="AF487977">
    <property type="protein sequence ID" value="AAL90886.1"/>
    <property type="molecule type" value="mRNA"/>
</dbReference>
<dbReference type="RefSeq" id="NP_808812.2">
    <property type="nucleotide sequence ID" value="NM_177943.2"/>
</dbReference>
<dbReference type="RefSeq" id="XP_010812385.1">
    <property type="nucleotide sequence ID" value="XM_010814083.2"/>
</dbReference>
<dbReference type="RefSeq" id="XP_015331029.1">
    <property type="nucleotide sequence ID" value="XM_015475543.1"/>
</dbReference>
<dbReference type="SMR" id="P58875"/>
<dbReference type="FunCoup" id="P58875">
    <property type="interactions" value="595"/>
</dbReference>
<dbReference type="STRING" id="9913.ENSBTAP00000051657"/>
<dbReference type="PaxDb" id="9913-ENSBTAP00000051657"/>
<dbReference type="PeptideAtlas" id="P58875"/>
<dbReference type="GeneID" id="282469"/>
<dbReference type="KEGG" id="bta:282469"/>
<dbReference type="CTD" id="23541"/>
<dbReference type="eggNOG" id="KOG1471">
    <property type="taxonomic scope" value="Eukaryota"/>
</dbReference>
<dbReference type="HOGENOM" id="CLU_014001_2_1_1"/>
<dbReference type="InParanoid" id="P58875"/>
<dbReference type="OrthoDB" id="1434354at2759"/>
<dbReference type="TreeFam" id="TF313988"/>
<dbReference type="Proteomes" id="UP000009136">
    <property type="component" value="Unplaced"/>
</dbReference>
<dbReference type="GO" id="GO:0005737">
    <property type="term" value="C:cytoplasm"/>
    <property type="evidence" value="ECO:0000318"/>
    <property type="project" value="GO_Central"/>
</dbReference>
<dbReference type="GO" id="GO:0005829">
    <property type="term" value="C:cytosol"/>
    <property type="evidence" value="ECO:0000318"/>
    <property type="project" value="GO_Central"/>
</dbReference>
<dbReference type="GO" id="GO:0005634">
    <property type="term" value="C:nucleus"/>
    <property type="evidence" value="ECO:0007669"/>
    <property type="project" value="UniProtKB-SubCell"/>
</dbReference>
<dbReference type="GO" id="GO:0008289">
    <property type="term" value="F:lipid binding"/>
    <property type="evidence" value="ECO:0007669"/>
    <property type="project" value="UniProtKB-KW"/>
</dbReference>
<dbReference type="CDD" id="cd00170">
    <property type="entry name" value="SEC14"/>
    <property type="match status" value="1"/>
</dbReference>
<dbReference type="FunFam" id="3.40.525.10:FF:000009">
    <property type="entry name" value="SEC14-like 2 (S. cerevisiae)"/>
    <property type="match status" value="1"/>
</dbReference>
<dbReference type="FunFam" id="2.60.120.680:FF:000001">
    <property type="entry name" value="SEC14-like protein 2 isoform X1"/>
    <property type="match status" value="1"/>
</dbReference>
<dbReference type="Gene3D" id="3.40.525.10">
    <property type="entry name" value="CRAL-TRIO lipid binding domain"/>
    <property type="match status" value="1"/>
</dbReference>
<dbReference type="Gene3D" id="2.60.120.680">
    <property type="entry name" value="GOLD domain"/>
    <property type="match status" value="1"/>
</dbReference>
<dbReference type="InterPro" id="IPR001251">
    <property type="entry name" value="CRAL-TRIO_dom"/>
</dbReference>
<dbReference type="InterPro" id="IPR036865">
    <property type="entry name" value="CRAL-TRIO_dom_sf"/>
</dbReference>
<dbReference type="InterPro" id="IPR011074">
    <property type="entry name" value="CRAL/TRIO_N_dom"/>
</dbReference>
<dbReference type="InterPro" id="IPR036273">
    <property type="entry name" value="CRAL/TRIO_N_dom_sf"/>
</dbReference>
<dbReference type="InterPro" id="IPR009038">
    <property type="entry name" value="GOLD_dom"/>
</dbReference>
<dbReference type="InterPro" id="IPR036598">
    <property type="entry name" value="GOLD_dom_sf"/>
</dbReference>
<dbReference type="InterPro" id="IPR051064">
    <property type="entry name" value="SEC14/CRAL-TRIO_domain"/>
</dbReference>
<dbReference type="PANTHER" id="PTHR23324">
    <property type="entry name" value="SEC14 RELATED PROTEIN"/>
    <property type="match status" value="1"/>
</dbReference>
<dbReference type="PANTHER" id="PTHR23324:SF90">
    <property type="entry name" value="SEC14-LIKE PROTEIN 2"/>
    <property type="match status" value="1"/>
</dbReference>
<dbReference type="Pfam" id="PF00650">
    <property type="entry name" value="CRAL_TRIO"/>
    <property type="match status" value="1"/>
</dbReference>
<dbReference type="Pfam" id="PF03765">
    <property type="entry name" value="CRAL_TRIO_N"/>
    <property type="match status" value="1"/>
</dbReference>
<dbReference type="PRINTS" id="PR00180">
    <property type="entry name" value="CRETINALDHBP"/>
</dbReference>
<dbReference type="SMART" id="SM01100">
    <property type="entry name" value="CRAL_TRIO_N"/>
    <property type="match status" value="1"/>
</dbReference>
<dbReference type="SMART" id="SM00516">
    <property type="entry name" value="SEC14"/>
    <property type="match status" value="1"/>
</dbReference>
<dbReference type="SUPFAM" id="SSF52087">
    <property type="entry name" value="CRAL/TRIO domain"/>
    <property type="match status" value="1"/>
</dbReference>
<dbReference type="SUPFAM" id="SSF46938">
    <property type="entry name" value="CRAL/TRIO N-terminal domain"/>
    <property type="match status" value="1"/>
</dbReference>
<dbReference type="SUPFAM" id="SSF101576">
    <property type="entry name" value="Supernatant protein factor (SPF), C-terminal domain"/>
    <property type="match status" value="1"/>
</dbReference>
<dbReference type="PROSITE" id="PS50191">
    <property type="entry name" value="CRAL_TRIO"/>
    <property type="match status" value="1"/>
</dbReference>
<dbReference type="PROSITE" id="PS50866">
    <property type="entry name" value="GOLD"/>
    <property type="match status" value="1"/>
</dbReference>
<sequence>MSGRVGDLSPKQKEALAKFRENVQDVLPALPNPDDYFLLRWLRARNFNLQKSEAMLRKHVEFRKQKDIDNIMSWQPPEVVQQYLSGGMCGYDLEGSPIWYDIIGPLDAKGLLLSASKQDLFKTKMRDCELLLQECVRQTEKMGKKIEATTLIYDCEGLGLKHLWKPAVEAYGEFLCMFEENYPETLKRLFIVKAPKLFPVAYNLVKPFLSEDTRKKIQVLGANWKEVLLKYISPDQLPVEYGGTMTDPDGNPKCKSKINYGGDIPKKYYVRDQVKQQYEHSVQISRGSSHQVEYEILFPGCVLRWQFMSDGSDIGFGIFLKTKVGERQRAGEMREVLPSQRYNAHLVPEDGSLTCSDPGIYVLRFDNTYSFIHAKKVSFTVEVLLPDKALEEKMQQLGAVTPK</sequence>
<gene>
    <name type="primary">SEC14L2</name>
</gene>
<proteinExistence type="evidence at protein level"/>
<comment type="function">
    <text evidence="1">Carrier protein. Binds to some hydrophobic molecules and promotes their transfer between the different cellular sites. Binds with high affinity to alpha-tocopherol. Also binds with a weaker affinity to other tocopherols and to tocotrienols. May have a transcriptional activatory activity via its association with alpha-tocopherol. Probably recognizes and binds some squalene structure, suggesting that it may regulate cholesterol biosynthesis by increasing the transfer of squalene to a metabolic active pool in the cell (By similarity).</text>
</comment>
<comment type="subunit">
    <text>Monomer.</text>
</comment>
<comment type="subcellular location">
    <subcellularLocation>
        <location evidence="1">Cytoplasm</location>
    </subcellularLocation>
    <subcellularLocation>
        <location evidence="1">Nucleus</location>
    </subcellularLocation>
    <text evidence="1">Cytoplasmic in absence of alpha-tocopherol, and nuclear in presence of alpha-tocopherol.</text>
</comment>
<comment type="PTM">
    <text>The N-terminus is blocked.</text>
</comment>
<reference key="1">
    <citation type="journal article" date="2000" name="J. Biol. Chem.">
        <title>A novel human tocopherol-associated protein: cloning, in vitro expression, and characterization.</title>
        <authorList>
            <person name="Zimmer S."/>
            <person name="Stocker A."/>
            <person name="Sarbolouki M.N."/>
            <person name="Spycher S.E."/>
            <person name="Sassoon J."/>
            <person name="Azzi A."/>
        </authorList>
    </citation>
    <scope>NUCLEOTIDE SEQUENCE [MRNA]</scope>
    <scope>PROTEIN SEQUENCE OF 178-195 AND 335-353</scope>
    <source>
        <tissue>Liver</tissue>
    </source>
</reference>
<reference key="2">
    <citation type="submission" date="2005-11" db="EMBL/GenBank/DDBJ databases">
        <authorList>
            <consortium name="NIH - Mammalian Gene Collection (MGC) project"/>
        </authorList>
    </citation>
    <scope>NUCLEOTIDE SEQUENCE [LARGE SCALE MRNA]</scope>
    <source>
        <strain>Crossbred X Angus</strain>
        <tissue>Liver</tissue>
    </source>
</reference>
<reference key="3">
    <citation type="submission" date="2002-02" db="EMBL/GenBank/DDBJ databases">
        <title>Induction of hepatic tocopherol associated protein (TAP) mRNA but not alpha-tocopherol transfer protein (TTP) mRNA in cattle fed increasing levels of vitamin E.</title>
        <authorList>
            <person name="Meadus J."/>
            <person name="MacInnis R."/>
            <person name="Dubeski P."/>
            <person name="Hidiroglou N."/>
            <person name="Madere R."/>
        </authorList>
    </citation>
    <scope>NUCLEOTIDE SEQUENCE [MRNA] OF 1-387</scope>
    <source>
        <tissue>Liver</tissue>
    </source>
</reference>
<keyword id="KW-0010">Activator</keyword>
<keyword id="KW-0963">Cytoplasm</keyword>
<keyword id="KW-0903">Direct protein sequencing</keyword>
<keyword id="KW-0446">Lipid-binding</keyword>
<keyword id="KW-0539">Nucleus</keyword>
<keyword id="KW-1185">Reference proteome</keyword>
<keyword id="KW-0804">Transcription</keyword>
<keyword id="KW-0805">Transcription regulation</keyword>
<keyword id="KW-0813">Transport</keyword>
<organism>
    <name type="scientific">Bos taurus</name>
    <name type="common">Bovine</name>
    <dbReference type="NCBI Taxonomy" id="9913"/>
    <lineage>
        <taxon>Eukaryota</taxon>
        <taxon>Metazoa</taxon>
        <taxon>Chordata</taxon>
        <taxon>Craniata</taxon>
        <taxon>Vertebrata</taxon>
        <taxon>Euteleostomi</taxon>
        <taxon>Mammalia</taxon>
        <taxon>Eutheria</taxon>
        <taxon>Laurasiatheria</taxon>
        <taxon>Artiodactyla</taxon>
        <taxon>Ruminantia</taxon>
        <taxon>Pecora</taxon>
        <taxon>Bovidae</taxon>
        <taxon>Bovinae</taxon>
        <taxon>Bos</taxon>
    </lineage>
</organism>
<feature type="chain" id="PRO_0000210754" description="SEC14-like protein 2">
    <location>
        <begin position="1"/>
        <end position="403"/>
    </location>
</feature>
<feature type="domain" description="CRAL-TRIO" evidence="3">
    <location>
        <begin position="76"/>
        <end position="249"/>
    </location>
</feature>
<feature type="domain" description="GOLD" evidence="4">
    <location>
        <begin position="275"/>
        <end position="383"/>
    </location>
</feature>
<feature type="modified residue" description="N6-succinyllysine" evidence="2">
    <location>
        <position position="11"/>
    </location>
</feature>
<feature type="modified residue" description="N6-succinyllysine" evidence="2">
    <location>
        <position position="51"/>
    </location>
</feature>
<feature type="modified residue" description="N6-succinyllysine" evidence="2">
    <location>
        <position position="253"/>
    </location>
</feature>
<feature type="modified residue" description="N6-succinyllysine" evidence="2">
    <location>
        <position position="257"/>
    </location>
</feature>
<feature type="modified residue" description="N6-succinyllysine" evidence="2">
    <location>
        <position position="393"/>
    </location>
</feature>
<feature type="sequence conflict" description="In Ref. 1; AA sequence." evidence="5" ref="1">
    <original>K</original>
    <variation>G</variation>
    <location>
        <position position="193"/>
    </location>
</feature>
<feature type="sequence conflict" description="In Ref. 3; AAL90886." evidence="5" ref="3">
    <original>N</original>
    <variation>S</variation>
    <location>
        <position position="343"/>
    </location>
</feature>
<feature type="sequence conflict" description="In Ref. 3; AAL90886." evidence="5" ref="3">
    <original>E</original>
    <variation>D</variation>
    <location>
        <position position="382"/>
    </location>
</feature>
<feature type="sequence conflict" description="In Ref. 2; AAI09892." evidence="5" ref="2">
    <original>L</original>
    <variation>S</variation>
    <location>
        <position position="390"/>
    </location>
</feature>
<evidence type="ECO:0000250" key="1"/>
<evidence type="ECO:0000250" key="2">
    <source>
        <dbReference type="UniProtKB" id="Q99J08"/>
    </source>
</evidence>
<evidence type="ECO:0000255" key="3">
    <source>
        <dbReference type="PROSITE-ProRule" id="PRU00056"/>
    </source>
</evidence>
<evidence type="ECO:0000255" key="4">
    <source>
        <dbReference type="PROSITE-ProRule" id="PRU00096"/>
    </source>
</evidence>
<evidence type="ECO:0000305" key="5"/>